<name>GMAS_METMY</name>
<accession>A9ZPH9</accession>
<organism>
    <name type="scientific">Methylovorus mays</name>
    <dbReference type="NCBI Taxonomy" id="184077"/>
    <lineage>
        <taxon>Bacteria</taxon>
        <taxon>Pseudomonadati</taxon>
        <taxon>Pseudomonadota</taxon>
        <taxon>Betaproteobacteria</taxon>
        <taxon>Nitrosomonadales</taxon>
        <taxon>Methylophilaceae</taxon>
        <taxon>Methylovorus</taxon>
    </lineage>
</organism>
<sequence>MKSLEEAQKFLEDHHVKYVLAQFVDIHGVAKVKSVPASHLNDILTTGAGFAGGAIWGTGIAPNGPDYMAIGELSTLSLIPWQPGYARLVCDGHVNGKPYEFDTRVVLKQQIARLAEKGWTLYTGLEPEFSLLKKDEHGAVHPFDDSDTLQKPCYDYKGITRHSPFLEKLTESLVEVGLDIYQIDHEDANGQFEINYTYADCLKSADDYIMFKMAASEIANELGIICSFMPKPFSNRPGNGMHMHMSIGDGKKSLFQDDSDPSGLGLSKLAYHFLGGILAHAPALAAVCAPTVNSYKRLVVGRSLSGATWAPAYIAYGNNNRSTLVRIPYGRLELRLPDGSCNPYLATAAVIAAGLDGVARELDPGTGRDDNLYDYSLEQLAEFGIGILPQNLGEALDALEADQVIMDAMGPGLSKEFVELKRMEWVDYMRHVSDWEINRYVQFY</sequence>
<evidence type="ECO:0000255" key="1">
    <source>
        <dbReference type="PROSITE-ProRule" id="PRU01330"/>
    </source>
</evidence>
<evidence type="ECO:0000255" key="2">
    <source>
        <dbReference type="PROSITE-ProRule" id="PRU01331"/>
    </source>
</evidence>
<evidence type="ECO:0000269" key="3">
    <source>
    </source>
</evidence>
<evidence type="ECO:0000269" key="4">
    <source>
    </source>
</evidence>
<evidence type="ECO:0000303" key="5">
    <source>
    </source>
</evidence>
<evidence type="ECO:0000303" key="6">
    <source>
    </source>
</evidence>
<evidence type="ECO:0000305" key="7"/>
<evidence type="ECO:0000305" key="8">
    <source>
    </source>
</evidence>
<evidence type="ECO:0000305" key="9">
    <source>
    </source>
</evidence>
<keyword id="KW-0067">ATP-binding</keyword>
<keyword id="KW-0903">Direct protein sequencing</keyword>
<keyword id="KW-0436">Ligase</keyword>
<keyword id="KW-0460">Magnesium</keyword>
<keyword id="KW-0547">Nucleotide-binding</keyword>
<dbReference type="EC" id="6.3.4.12" evidence="3 4"/>
<dbReference type="EC" id="6.3.1.6" evidence="3 4"/>
<dbReference type="EMBL" id="AB333782">
    <property type="protein sequence ID" value="BAF99006.1"/>
    <property type="molecule type" value="Genomic_DNA"/>
</dbReference>
<dbReference type="RefSeq" id="WP_230345983.1">
    <property type="nucleotide sequence ID" value="NZ_JAJAVG010000008.1"/>
</dbReference>
<dbReference type="SMR" id="A9ZPH9"/>
<dbReference type="BioCyc" id="MetaCyc:MONOMER-17029"/>
<dbReference type="BRENDA" id="6.3.4.12">
    <property type="organism ID" value="10768"/>
</dbReference>
<dbReference type="SABIO-RK" id="A9ZPH9"/>
<dbReference type="GO" id="GO:0005524">
    <property type="term" value="F:ATP binding"/>
    <property type="evidence" value="ECO:0007669"/>
    <property type="project" value="UniProtKB-KW"/>
</dbReference>
<dbReference type="GO" id="GO:0047942">
    <property type="term" value="F:glutamate-ethylamine ligase activity"/>
    <property type="evidence" value="ECO:0007669"/>
    <property type="project" value="UniProtKB-EC"/>
</dbReference>
<dbReference type="GO" id="GO:0047943">
    <property type="term" value="F:glutamate-methylamine ligase activity"/>
    <property type="evidence" value="ECO:0007669"/>
    <property type="project" value="UniProtKB-EC"/>
</dbReference>
<dbReference type="GO" id="GO:0004356">
    <property type="term" value="F:glutamine synthetase activity"/>
    <property type="evidence" value="ECO:0007669"/>
    <property type="project" value="InterPro"/>
</dbReference>
<dbReference type="GO" id="GO:0006542">
    <property type="term" value="P:glutamine biosynthetic process"/>
    <property type="evidence" value="ECO:0007669"/>
    <property type="project" value="InterPro"/>
</dbReference>
<dbReference type="Gene3D" id="3.10.20.70">
    <property type="entry name" value="Glutamine synthetase, N-terminal domain"/>
    <property type="match status" value="1"/>
</dbReference>
<dbReference type="Gene3D" id="3.30.590.10">
    <property type="entry name" value="Glutamine synthetase/guanido kinase, catalytic domain"/>
    <property type="match status" value="1"/>
</dbReference>
<dbReference type="InterPro" id="IPR008147">
    <property type="entry name" value="Gln_synt_N"/>
</dbReference>
<dbReference type="InterPro" id="IPR036651">
    <property type="entry name" value="Gln_synt_N_sf"/>
</dbReference>
<dbReference type="InterPro" id="IPR014746">
    <property type="entry name" value="Gln_synth/guanido_kin_cat_dom"/>
</dbReference>
<dbReference type="InterPro" id="IPR008146">
    <property type="entry name" value="Gln_synth_cat_dom"/>
</dbReference>
<dbReference type="InterPro" id="IPR027303">
    <property type="entry name" value="Gln_synth_gly_rich_site"/>
</dbReference>
<dbReference type="InterPro" id="IPR017536">
    <property type="entry name" value="Glutamine_synthetase_typeIII"/>
</dbReference>
<dbReference type="NCBIfam" id="TIGR03105">
    <property type="entry name" value="gln_synth_III"/>
    <property type="match status" value="1"/>
</dbReference>
<dbReference type="PANTHER" id="PTHR43785">
    <property type="entry name" value="GAMMA-GLUTAMYLPUTRESCINE SYNTHETASE"/>
    <property type="match status" value="1"/>
</dbReference>
<dbReference type="PANTHER" id="PTHR43785:SF14">
    <property type="entry name" value="GLUTAMINE SYNTHETASE"/>
    <property type="match status" value="1"/>
</dbReference>
<dbReference type="Pfam" id="PF00120">
    <property type="entry name" value="Gln-synt_C"/>
    <property type="match status" value="1"/>
</dbReference>
<dbReference type="SMART" id="SM01230">
    <property type="entry name" value="Gln-synt_C"/>
    <property type="match status" value="1"/>
</dbReference>
<dbReference type="SUPFAM" id="SSF54368">
    <property type="entry name" value="Glutamine synthetase, N-terminal domain"/>
    <property type="match status" value="1"/>
</dbReference>
<dbReference type="SUPFAM" id="SSF55931">
    <property type="entry name" value="Glutamine synthetase/guanido kinase"/>
    <property type="match status" value="1"/>
</dbReference>
<dbReference type="PROSITE" id="PS00181">
    <property type="entry name" value="GLNA_ATP"/>
    <property type="match status" value="1"/>
</dbReference>
<dbReference type="PROSITE" id="PS51986">
    <property type="entry name" value="GS_BETA_GRASP"/>
    <property type="match status" value="1"/>
</dbReference>
<dbReference type="PROSITE" id="PS51987">
    <property type="entry name" value="GS_CATALYTIC"/>
    <property type="match status" value="1"/>
</dbReference>
<feature type="chain" id="PRO_0000431889" description="Glutamate--methylamine ligase">
    <location>
        <begin position="1"/>
        <end position="444"/>
    </location>
</feature>
<feature type="domain" description="GS beta-grasp" evidence="1">
    <location>
        <begin position="14"/>
        <end position="97"/>
    </location>
</feature>
<feature type="domain" description="GS catalytic" evidence="2">
    <location>
        <begin position="103"/>
        <end position="444"/>
    </location>
</feature>
<feature type="sequence conflict" description="In Ref. 2; AA sequence." evidence="7" ref="2">
    <original>K</original>
    <variation>T</variation>
    <location>
        <position position="2"/>
    </location>
</feature>
<feature type="sequence conflict" description="In Ref. 2; AA sequence." evidence="7" ref="2">
    <original>H</original>
    <variation>D</variation>
    <location>
        <position position="14"/>
    </location>
</feature>
<feature type="sequence conflict" description="In Ref. 2; AA sequence." evidence="7" ref="2">
    <original>K</original>
    <variation>V</variation>
    <location>
        <position position="17"/>
    </location>
</feature>
<feature type="sequence conflict" description="In Ref. 1; AA sequence." evidence="7" ref="1">
    <original>IC</original>
    <variation>R</variation>
    <location>
        <begin position="225"/>
        <end position="226"/>
    </location>
</feature>
<feature type="sequence conflict" description="In Ref. 1; AA sequence." evidence="7" ref="1">
    <original>R</original>
    <variation>N</variation>
    <location>
        <position position="236"/>
    </location>
</feature>
<feature type="sequence conflict" description="In Ref. 1; AA sequence." evidence="7" ref="1">
    <original>N</original>
    <variation>G</variation>
    <location>
        <position position="239"/>
    </location>
</feature>
<feature type="sequence conflict" description="In Ref. 1; AA sequence." evidence="7" ref="1">
    <original>A</original>
    <variation>P</variation>
    <location>
        <position position="312"/>
    </location>
</feature>
<feature type="sequence conflict" description="In Ref. 1; AA sequence." evidence="7" ref="1">
    <original>I</original>
    <variation>Y</variation>
    <location>
        <position position="314"/>
    </location>
</feature>
<comment type="function">
    <text evidence="3 4">Catalyzes the formation of N(5)-methyl-L-glutamine from glutamate and methylamine. In vitro, can also use ethylamine, hydroxylamine and ammonia, with 75%, 40% and 1% activity compared to methylamine, respectively.</text>
</comment>
<comment type="catalytic activity">
    <reaction evidence="3 4">
        <text>methylamine + L-glutamate + ATP = N(5)-methyl-L-glutamine + ADP + phosphate + H(+)</text>
        <dbReference type="Rhea" id="RHEA:17117"/>
        <dbReference type="ChEBI" id="CHEBI:15378"/>
        <dbReference type="ChEBI" id="CHEBI:29985"/>
        <dbReference type="ChEBI" id="CHEBI:30616"/>
        <dbReference type="ChEBI" id="CHEBI:43474"/>
        <dbReference type="ChEBI" id="CHEBI:58200"/>
        <dbReference type="ChEBI" id="CHEBI:59338"/>
        <dbReference type="ChEBI" id="CHEBI:456216"/>
        <dbReference type="EC" id="6.3.4.12"/>
    </reaction>
</comment>
<comment type="catalytic activity">
    <reaction evidence="3 4">
        <text>ethylamine + L-glutamate + ATP = N(5)-ethyl-L-glutamine + ADP + phosphate + H(+)</text>
        <dbReference type="Rhea" id="RHEA:20525"/>
        <dbReference type="ChEBI" id="CHEBI:15378"/>
        <dbReference type="ChEBI" id="CHEBI:29985"/>
        <dbReference type="ChEBI" id="CHEBI:30616"/>
        <dbReference type="ChEBI" id="CHEBI:43474"/>
        <dbReference type="ChEBI" id="CHEBI:58128"/>
        <dbReference type="ChEBI" id="CHEBI:456216"/>
        <dbReference type="ChEBI" id="CHEBI:566789"/>
        <dbReference type="EC" id="6.3.1.6"/>
    </reaction>
</comment>
<comment type="cofactor">
    <cofactor evidence="3">
        <name>Mg(2+)</name>
        <dbReference type="ChEBI" id="CHEBI:18420"/>
    </cofactor>
</comment>
<comment type="activity regulation">
    <text evidence="3">Formation of theanine is repressed by a high concentration of glutamic acid.</text>
</comment>
<comment type="biophysicochemical properties">
    <kinetics>
        <KM evidence="3">0.18 mM for methylamine</KM>
        <KM evidence="3">0.57 mM for ethylamine</KM>
        <KM evidence="3">3.9 mM for hydroxylamine</KM>
        <KM evidence="3">84 mM for ammonia</KM>
        <KM evidence="3">1.4 mM for glutamic acid (with methylamine as substrate)</KM>
        <KM evidence="3">1.3 mM for glutamic acid (with ethylamine as substrate)</KM>
        <KM evidence="3">1.3 mM for ATP (with methylamine as substrate)</KM>
        <KM evidence="3">0.63 mM for ATP (with ethylamine as substrate)</KM>
    </kinetics>
</comment>
<comment type="induction">
    <text evidence="3">By methylamine.</text>
</comment>
<comment type="biotechnology">
    <text evidence="8 9">Could be used for theanine (N(5)-ethyl-L-glutamine) production, by coupling the reaction with the ATP-regeneration system of yeast sugar fermentation. Theanine occurs naturally in the tea plant (Camellia sinensis) and provides flavor to green tea. It also has several favorable physiological effects on mammals.</text>
</comment>
<comment type="similarity">
    <text evidence="7">Belongs to the glutamine synthetase family. Type 3 subfamily.</text>
</comment>
<reference key="1">
    <citation type="journal article" date="2008" name="Biosci. Biotechnol. Biochem.">
        <title>Cloning and expression of Methylovorus mays No. 9 gene encoding gamma-glutamylmethylamide synthetase: an enzyme usable in theanine formation by coupling with the alcoholic fermentation system of baker's yeast.</title>
        <authorList>
            <person name="Yamamoto S."/>
            <person name="Wakayama M."/>
            <person name="Tachiki T."/>
        </authorList>
    </citation>
    <scope>NUCLEOTIDE SEQUENCE [GENOMIC DNA]</scope>
    <scope>PROTEIN SEQUENCE OF 194-200; 222-241 AND 297-316</scope>
    <scope>FUNCTION</scope>
    <scope>CATALYTIC ACTIVITY</scope>
    <scope>BIOTECHNOLOGY</scope>
    <source>
        <strain>No. 9</strain>
    </source>
</reference>
<reference key="2">
    <citation type="journal article" date="2007" name="Biosci. Biotechnol. Biochem.">
        <title>Characterization of theanine-forming enzyme from Methylovorus mays no. 9 in respect to utilization of theanine production.</title>
        <authorList>
            <person name="Yamamoto S."/>
            <person name="Wakayama M."/>
            <person name="Tachiki T."/>
        </authorList>
    </citation>
    <scope>PROTEIN SEQUENCE OF 1-20</scope>
    <scope>FUNCTION</scope>
    <scope>CATALYTIC ACTIVITY</scope>
    <scope>COFACTOR</scope>
    <scope>ACTIVITY REGULATION</scope>
    <scope>BIOPHYSICOCHEMICAL PROPERTIES</scope>
    <scope>INDUCTION</scope>
    <scope>BIOTECHNOLOGY</scope>
    <source>
        <strain>No. 9</strain>
    </source>
</reference>
<protein>
    <recommendedName>
        <fullName evidence="7">Glutamate--methylamine ligase</fullName>
        <ecNumber evidence="3 4">6.3.4.12</ecNumber>
    </recommendedName>
    <alternativeName>
        <fullName evidence="5 6">Gamma-glutamylmethylamide synthetase</fullName>
        <shortName evidence="5 6">GMAS</shortName>
    </alternativeName>
    <alternativeName>
        <fullName evidence="7">Glutamate--ethylamine ligase</fullName>
        <ecNumber evidence="3 4">6.3.1.6</ecNumber>
    </alternativeName>
    <alternativeName>
        <fullName evidence="7">N(5)-ethyl-L-glutamine synthetase</fullName>
    </alternativeName>
    <alternativeName>
        <fullName evidence="7">Theanine synthetase</fullName>
    </alternativeName>
</protein>
<proteinExistence type="evidence at protein level"/>